<gene>
    <name evidence="1" type="primary">trmFO</name>
    <name type="ordered locus">Meso_1792</name>
</gene>
<keyword id="KW-0963">Cytoplasm</keyword>
<keyword id="KW-0274">FAD</keyword>
<keyword id="KW-0285">Flavoprotein</keyword>
<keyword id="KW-0489">Methyltransferase</keyword>
<keyword id="KW-0520">NAD</keyword>
<keyword id="KW-0521">NADP</keyword>
<keyword id="KW-0808">Transferase</keyword>
<keyword id="KW-0819">tRNA processing</keyword>
<reference key="1">
    <citation type="submission" date="2006-06" db="EMBL/GenBank/DDBJ databases">
        <title>Complete sequence of chromosome of Mesorhizobium sp. BNC1.</title>
        <authorList>
            <consortium name="US DOE Joint Genome Institute"/>
            <person name="Copeland A."/>
            <person name="Lucas S."/>
            <person name="Lapidus A."/>
            <person name="Barry K."/>
            <person name="Detter J.C."/>
            <person name="Glavina del Rio T."/>
            <person name="Hammon N."/>
            <person name="Israni S."/>
            <person name="Dalin E."/>
            <person name="Tice H."/>
            <person name="Pitluck S."/>
            <person name="Chertkov O."/>
            <person name="Brettin T."/>
            <person name="Bruce D."/>
            <person name="Han C."/>
            <person name="Tapia R."/>
            <person name="Gilna P."/>
            <person name="Schmutz J."/>
            <person name="Larimer F."/>
            <person name="Land M."/>
            <person name="Hauser L."/>
            <person name="Kyrpides N."/>
            <person name="Mikhailova N."/>
            <person name="Richardson P."/>
        </authorList>
    </citation>
    <scope>NUCLEOTIDE SEQUENCE [LARGE SCALE GENOMIC DNA]</scope>
    <source>
        <strain>BNC1</strain>
    </source>
</reference>
<organism>
    <name type="scientific">Chelativorans sp. (strain BNC1)</name>
    <dbReference type="NCBI Taxonomy" id="266779"/>
    <lineage>
        <taxon>Bacteria</taxon>
        <taxon>Pseudomonadati</taxon>
        <taxon>Pseudomonadota</taxon>
        <taxon>Alphaproteobacteria</taxon>
        <taxon>Hyphomicrobiales</taxon>
        <taxon>Phyllobacteriaceae</taxon>
        <taxon>Chelativorans</taxon>
    </lineage>
</organism>
<accession>Q11HD9</accession>
<proteinExistence type="inferred from homology"/>
<feature type="chain" id="PRO_0000346356" description="Methylenetetrahydrofolate--tRNA-(uracil-5-)-methyltransferase TrmFO">
    <location>
        <begin position="1"/>
        <end position="468"/>
    </location>
</feature>
<feature type="binding site" evidence="1">
    <location>
        <begin position="10"/>
        <end position="15"/>
    </location>
    <ligand>
        <name>FAD</name>
        <dbReference type="ChEBI" id="CHEBI:57692"/>
    </ligand>
</feature>
<name>TRMFO_CHESB</name>
<protein>
    <recommendedName>
        <fullName evidence="1">Methylenetetrahydrofolate--tRNA-(uracil-5-)-methyltransferase TrmFO</fullName>
        <ecNumber evidence="1">2.1.1.74</ecNumber>
    </recommendedName>
    <alternativeName>
        <fullName evidence="1">Folate-dependent tRNA (uracil-5-)-methyltransferase</fullName>
    </alternativeName>
    <alternativeName>
        <fullName evidence="1">Folate-dependent tRNA(M-5-U54)-methyltransferase</fullName>
    </alternativeName>
</protein>
<comment type="function">
    <text evidence="1">Catalyzes the folate-dependent formation of 5-methyl-uridine at position 54 (M-5-U54) in all tRNAs.</text>
</comment>
<comment type="catalytic activity">
    <reaction evidence="1">
        <text>uridine(54) in tRNA + (6R)-5,10-methylene-5,6,7,8-tetrahydrofolate + NADH + H(+) = 5-methyluridine(54) in tRNA + (6S)-5,6,7,8-tetrahydrofolate + NAD(+)</text>
        <dbReference type="Rhea" id="RHEA:16873"/>
        <dbReference type="Rhea" id="RHEA-COMP:10167"/>
        <dbReference type="Rhea" id="RHEA-COMP:10193"/>
        <dbReference type="ChEBI" id="CHEBI:15378"/>
        <dbReference type="ChEBI" id="CHEBI:15636"/>
        <dbReference type="ChEBI" id="CHEBI:57453"/>
        <dbReference type="ChEBI" id="CHEBI:57540"/>
        <dbReference type="ChEBI" id="CHEBI:57945"/>
        <dbReference type="ChEBI" id="CHEBI:65315"/>
        <dbReference type="ChEBI" id="CHEBI:74447"/>
        <dbReference type="EC" id="2.1.1.74"/>
    </reaction>
</comment>
<comment type="catalytic activity">
    <reaction evidence="1">
        <text>uridine(54) in tRNA + (6R)-5,10-methylene-5,6,7,8-tetrahydrofolate + NADPH + H(+) = 5-methyluridine(54) in tRNA + (6S)-5,6,7,8-tetrahydrofolate + NADP(+)</text>
        <dbReference type="Rhea" id="RHEA:62372"/>
        <dbReference type="Rhea" id="RHEA-COMP:10167"/>
        <dbReference type="Rhea" id="RHEA-COMP:10193"/>
        <dbReference type="ChEBI" id="CHEBI:15378"/>
        <dbReference type="ChEBI" id="CHEBI:15636"/>
        <dbReference type="ChEBI" id="CHEBI:57453"/>
        <dbReference type="ChEBI" id="CHEBI:57783"/>
        <dbReference type="ChEBI" id="CHEBI:58349"/>
        <dbReference type="ChEBI" id="CHEBI:65315"/>
        <dbReference type="ChEBI" id="CHEBI:74447"/>
        <dbReference type="EC" id="2.1.1.74"/>
    </reaction>
</comment>
<comment type="cofactor">
    <cofactor evidence="1">
        <name>FAD</name>
        <dbReference type="ChEBI" id="CHEBI:57692"/>
    </cofactor>
</comment>
<comment type="subcellular location">
    <subcellularLocation>
        <location evidence="1">Cytoplasm</location>
    </subcellularLocation>
</comment>
<comment type="similarity">
    <text evidence="1">Belongs to the MnmG family. TrmFO subfamily.</text>
</comment>
<comment type="sequence caution" evidence="2">
    <conflict type="erroneous initiation">
        <sequence resource="EMBL-CDS" id="ABG63186"/>
    </conflict>
</comment>
<dbReference type="EC" id="2.1.1.74" evidence="1"/>
<dbReference type="EMBL" id="CP000390">
    <property type="protein sequence ID" value="ABG63186.1"/>
    <property type="status" value="ALT_INIT"/>
    <property type="molecule type" value="Genomic_DNA"/>
</dbReference>
<dbReference type="SMR" id="Q11HD9"/>
<dbReference type="STRING" id="266779.Meso_1792"/>
<dbReference type="KEGG" id="mes:Meso_1792"/>
<dbReference type="eggNOG" id="COG1206">
    <property type="taxonomic scope" value="Bacteria"/>
</dbReference>
<dbReference type="HOGENOM" id="CLU_033057_1_0_5"/>
<dbReference type="OrthoDB" id="9803114at2"/>
<dbReference type="GO" id="GO:0005829">
    <property type="term" value="C:cytosol"/>
    <property type="evidence" value="ECO:0007669"/>
    <property type="project" value="TreeGrafter"/>
</dbReference>
<dbReference type="GO" id="GO:0050660">
    <property type="term" value="F:flavin adenine dinucleotide binding"/>
    <property type="evidence" value="ECO:0007669"/>
    <property type="project" value="UniProtKB-UniRule"/>
</dbReference>
<dbReference type="GO" id="GO:0047151">
    <property type="term" value="F:tRNA (uracil(54)-C5)-methyltransferase activity, 5,10-methylenetetrahydrofolate-dependent"/>
    <property type="evidence" value="ECO:0007669"/>
    <property type="project" value="UniProtKB-UniRule"/>
</dbReference>
<dbReference type="GO" id="GO:0030488">
    <property type="term" value="P:tRNA methylation"/>
    <property type="evidence" value="ECO:0007669"/>
    <property type="project" value="TreeGrafter"/>
</dbReference>
<dbReference type="GO" id="GO:0002098">
    <property type="term" value="P:tRNA wobble uridine modification"/>
    <property type="evidence" value="ECO:0007669"/>
    <property type="project" value="TreeGrafter"/>
</dbReference>
<dbReference type="Gene3D" id="3.50.50.60">
    <property type="entry name" value="FAD/NAD(P)-binding domain"/>
    <property type="match status" value="2"/>
</dbReference>
<dbReference type="HAMAP" id="MF_01037">
    <property type="entry name" value="TrmFO"/>
    <property type="match status" value="1"/>
</dbReference>
<dbReference type="InterPro" id="IPR036188">
    <property type="entry name" value="FAD/NAD-bd_sf"/>
</dbReference>
<dbReference type="InterPro" id="IPR002218">
    <property type="entry name" value="MnmG-rel"/>
</dbReference>
<dbReference type="InterPro" id="IPR020595">
    <property type="entry name" value="MnmG-rel_CS"/>
</dbReference>
<dbReference type="InterPro" id="IPR040131">
    <property type="entry name" value="MnmG_N"/>
</dbReference>
<dbReference type="InterPro" id="IPR004417">
    <property type="entry name" value="TrmFO"/>
</dbReference>
<dbReference type="NCBIfam" id="TIGR00137">
    <property type="entry name" value="gid_trmFO"/>
    <property type="match status" value="1"/>
</dbReference>
<dbReference type="NCBIfam" id="NF003739">
    <property type="entry name" value="PRK05335.1"/>
    <property type="match status" value="1"/>
</dbReference>
<dbReference type="PANTHER" id="PTHR11806">
    <property type="entry name" value="GLUCOSE INHIBITED DIVISION PROTEIN A"/>
    <property type="match status" value="1"/>
</dbReference>
<dbReference type="PANTHER" id="PTHR11806:SF2">
    <property type="entry name" value="METHYLENETETRAHYDROFOLATE--TRNA-(URACIL-5-)-METHYLTRANSFERASE TRMFO"/>
    <property type="match status" value="1"/>
</dbReference>
<dbReference type="Pfam" id="PF01134">
    <property type="entry name" value="GIDA"/>
    <property type="match status" value="1"/>
</dbReference>
<dbReference type="SUPFAM" id="SSF51905">
    <property type="entry name" value="FAD/NAD(P)-binding domain"/>
    <property type="match status" value="1"/>
</dbReference>
<dbReference type="PROSITE" id="PS01281">
    <property type="entry name" value="GIDA_2"/>
    <property type="match status" value="1"/>
</dbReference>
<sequence length="468" mass="50413">MTTKPIHVIGGGLAGSEAAWQAAEAGVPVILHEMRPVRGTDAHKTDGLAELVCSNSFRSDDAQTNAVGLLHAEMRLAGSLIMRAGDANQVPAGGALAVDRDGFSDAVTQAIHGHPLITVVREEVAGLPPSEWDQTIIATGPLTAPSLAEAIRQETGAEALAFFDAIAPIVHFDTIDMDTCWFQSRYDKAGPGGTGKDYINCPMNKEQYQAFVQALLDGEKTAFKEWEGTPYFDGCLPIEVMAERGPETLRHGPMKPMGLTNAHKPDEKAYAVVQLRQDNALGTLYNMVGFQTKLKYAEQVRIFRMIPGLENAEFARLGGLHRNTYINSPALLDITLQLKSRPGLRFAGQITGCEGYVESAAMGLMAGRFAAAARLGRKMMPPPATTAFGSLISHITGGHILSEDEPGKRSFQPMNVNFGLFPPVELPKPEGKRLRGKEKTLAKKRAITARALADCSDWLGVPTRAAAE</sequence>
<evidence type="ECO:0000255" key="1">
    <source>
        <dbReference type="HAMAP-Rule" id="MF_01037"/>
    </source>
</evidence>
<evidence type="ECO:0000305" key="2"/>